<organism>
    <name type="scientific">Methanococcus maripaludis (strain C7 / ATCC BAA-1331)</name>
    <dbReference type="NCBI Taxonomy" id="426368"/>
    <lineage>
        <taxon>Archaea</taxon>
        <taxon>Methanobacteriati</taxon>
        <taxon>Methanobacteriota</taxon>
        <taxon>Methanomada group</taxon>
        <taxon>Methanococci</taxon>
        <taxon>Methanococcales</taxon>
        <taxon>Methanococcaceae</taxon>
        <taxon>Methanococcus</taxon>
    </lineage>
</organism>
<sequence>MAILKASEIRELSAEEMKGKIAELKRELMKEGVNKSTGGAPSNPGKISEIKRTIARILTIMNEKEAQAKNA</sequence>
<accession>A6VGZ1</accession>
<reference key="1">
    <citation type="submission" date="2007-06" db="EMBL/GenBank/DDBJ databases">
        <title>Complete sequence of Methanococcus maripaludis C7.</title>
        <authorList>
            <consortium name="US DOE Joint Genome Institute"/>
            <person name="Copeland A."/>
            <person name="Lucas S."/>
            <person name="Lapidus A."/>
            <person name="Barry K."/>
            <person name="Glavina del Rio T."/>
            <person name="Dalin E."/>
            <person name="Tice H."/>
            <person name="Pitluck S."/>
            <person name="Clum A."/>
            <person name="Schmutz J."/>
            <person name="Larimer F."/>
            <person name="Land M."/>
            <person name="Hauser L."/>
            <person name="Kyrpides N."/>
            <person name="Anderson I."/>
            <person name="Sieprawska-Lupa M."/>
            <person name="Whitman W.B."/>
            <person name="Richardson P."/>
        </authorList>
    </citation>
    <scope>NUCLEOTIDE SEQUENCE [LARGE SCALE GENOMIC DNA]</scope>
    <source>
        <strain>C7 / ATCC BAA-1331</strain>
    </source>
</reference>
<dbReference type="EMBL" id="CP000745">
    <property type="protein sequence ID" value="ABR65717.1"/>
    <property type="molecule type" value="Genomic_DNA"/>
</dbReference>
<dbReference type="SMR" id="A6VGZ1"/>
<dbReference type="STRING" id="426368.MmarC7_0650"/>
<dbReference type="KEGG" id="mmz:MmarC7_0650"/>
<dbReference type="eggNOG" id="arCOG00785">
    <property type="taxonomic scope" value="Archaea"/>
</dbReference>
<dbReference type="HOGENOM" id="CLU_158491_2_2_2"/>
<dbReference type="OrthoDB" id="11736at2157"/>
<dbReference type="GO" id="GO:0022625">
    <property type="term" value="C:cytosolic large ribosomal subunit"/>
    <property type="evidence" value="ECO:0007669"/>
    <property type="project" value="TreeGrafter"/>
</dbReference>
<dbReference type="GO" id="GO:0003735">
    <property type="term" value="F:structural constituent of ribosome"/>
    <property type="evidence" value="ECO:0007669"/>
    <property type="project" value="InterPro"/>
</dbReference>
<dbReference type="GO" id="GO:0006412">
    <property type="term" value="P:translation"/>
    <property type="evidence" value="ECO:0007669"/>
    <property type="project" value="UniProtKB-UniRule"/>
</dbReference>
<dbReference type="CDD" id="cd00427">
    <property type="entry name" value="Ribosomal_L29_HIP"/>
    <property type="match status" value="1"/>
</dbReference>
<dbReference type="FunFam" id="1.10.287.310:FF:000001">
    <property type="entry name" value="50S ribosomal protein L29"/>
    <property type="match status" value="1"/>
</dbReference>
<dbReference type="Gene3D" id="1.10.287.310">
    <property type="match status" value="1"/>
</dbReference>
<dbReference type="HAMAP" id="MF_00374">
    <property type="entry name" value="Ribosomal_uL29"/>
    <property type="match status" value="1"/>
</dbReference>
<dbReference type="InterPro" id="IPR050063">
    <property type="entry name" value="Ribosomal_protein_uL29"/>
</dbReference>
<dbReference type="InterPro" id="IPR001854">
    <property type="entry name" value="Ribosomal_uL29"/>
</dbReference>
<dbReference type="InterPro" id="IPR018254">
    <property type="entry name" value="Ribosomal_uL29_CS"/>
</dbReference>
<dbReference type="InterPro" id="IPR036049">
    <property type="entry name" value="Ribosomal_uL29_sf"/>
</dbReference>
<dbReference type="NCBIfam" id="TIGR00012">
    <property type="entry name" value="L29"/>
    <property type="match status" value="1"/>
</dbReference>
<dbReference type="PANTHER" id="PTHR10916">
    <property type="entry name" value="60S RIBOSOMAL PROTEIN L35/50S RIBOSOMAL PROTEIN L29"/>
    <property type="match status" value="1"/>
</dbReference>
<dbReference type="PANTHER" id="PTHR10916:SF0">
    <property type="entry name" value="LARGE RIBOSOMAL SUBUNIT PROTEIN UL29C"/>
    <property type="match status" value="1"/>
</dbReference>
<dbReference type="Pfam" id="PF00831">
    <property type="entry name" value="Ribosomal_L29"/>
    <property type="match status" value="1"/>
</dbReference>
<dbReference type="SUPFAM" id="SSF46561">
    <property type="entry name" value="Ribosomal protein L29 (L29p)"/>
    <property type="match status" value="1"/>
</dbReference>
<dbReference type="PROSITE" id="PS00579">
    <property type="entry name" value="RIBOSOMAL_L29"/>
    <property type="match status" value="1"/>
</dbReference>
<comment type="similarity">
    <text evidence="1">Belongs to the universal ribosomal protein uL29 family.</text>
</comment>
<proteinExistence type="inferred from homology"/>
<feature type="chain" id="PRO_1000007521" description="Large ribosomal subunit protein uL29">
    <location>
        <begin position="1"/>
        <end position="71"/>
    </location>
</feature>
<keyword id="KW-0687">Ribonucleoprotein</keyword>
<keyword id="KW-0689">Ribosomal protein</keyword>
<evidence type="ECO:0000255" key="1">
    <source>
        <dbReference type="HAMAP-Rule" id="MF_00374"/>
    </source>
</evidence>
<evidence type="ECO:0000305" key="2"/>
<protein>
    <recommendedName>
        <fullName evidence="1">Large ribosomal subunit protein uL29</fullName>
    </recommendedName>
    <alternativeName>
        <fullName evidence="2">50S ribosomal protein L29</fullName>
    </alternativeName>
</protein>
<gene>
    <name evidence="1" type="primary">rpl29</name>
    <name type="ordered locus">MmarC7_0650</name>
</gene>
<name>RL29_METM7</name>